<dbReference type="EMBL" id="CM001234">
    <property type="protein sequence ID" value="EHA50581.1"/>
    <property type="molecule type" value="Genomic_DNA"/>
</dbReference>
<dbReference type="RefSeq" id="XP_003716900.1">
    <property type="nucleotide sequence ID" value="XM_003716852.1"/>
</dbReference>
<dbReference type="SMR" id="Q52DM9"/>
<dbReference type="FunCoup" id="Q52DM9">
    <property type="interactions" value="417"/>
</dbReference>
<dbReference type="STRING" id="242507.Q52DM9"/>
<dbReference type="EnsemblFungi" id="MGG_06627T0">
    <property type="protein sequence ID" value="MGG_06627T0"/>
    <property type="gene ID" value="MGG_06627"/>
</dbReference>
<dbReference type="GeneID" id="2684782"/>
<dbReference type="KEGG" id="mgr:MGG_06627"/>
<dbReference type="VEuPathDB" id="FungiDB:MGG_06627"/>
<dbReference type="eggNOG" id="KOG3077">
    <property type="taxonomic scope" value="Eukaryota"/>
</dbReference>
<dbReference type="HOGENOM" id="CLU_047042_1_0_1"/>
<dbReference type="InParanoid" id="Q52DM9"/>
<dbReference type="OMA" id="LWCKFLQ"/>
<dbReference type="OrthoDB" id="27198at2759"/>
<dbReference type="Proteomes" id="UP000009058">
    <property type="component" value="Chromosome 4"/>
</dbReference>
<dbReference type="GO" id="GO:0000151">
    <property type="term" value="C:ubiquitin ligase complex"/>
    <property type="evidence" value="ECO:0007669"/>
    <property type="project" value="TreeGrafter"/>
</dbReference>
<dbReference type="GO" id="GO:0097602">
    <property type="term" value="F:cullin family protein binding"/>
    <property type="evidence" value="ECO:0007669"/>
    <property type="project" value="TreeGrafter"/>
</dbReference>
<dbReference type="GO" id="GO:0031624">
    <property type="term" value="F:ubiquitin conjugating enzyme binding"/>
    <property type="evidence" value="ECO:0007669"/>
    <property type="project" value="TreeGrafter"/>
</dbReference>
<dbReference type="GO" id="GO:0032182">
    <property type="term" value="F:ubiquitin-like protein binding"/>
    <property type="evidence" value="ECO:0007669"/>
    <property type="project" value="TreeGrafter"/>
</dbReference>
<dbReference type="GO" id="GO:0045116">
    <property type="term" value="P:protein neddylation"/>
    <property type="evidence" value="ECO:0007669"/>
    <property type="project" value="TreeGrafter"/>
</dbReference>
<dbReference type="CDD" id="cd14350">
    <property type="entry name" value="UBA_DCNL"/>
    <property type="match status" value="1"/>
</dbReference>
<dbReference type="Gene3D" id="1.10.238.200">
    <property type="entry name" value="Cullin, PONY binding domain"/>
    <property type="match status" value="1"/>
</dbReference>
<dbReference type="Gene3D" id="1.10.8.10">
    <property type="entry name" value="DNA helicase RuvA subunit, C-terminal domain"/>
    <property type="match status" value="1"/>
</dbReference>
<dbReference type="Gene3D" id="1.10.238.10">
    <property type="entry name" value="EF-hand"/>
    <property type="match status" value="1"/>
</dbReference>
<dbReference type="InterPro" id="IPR014764">
    <property type="entry name" value="DCN-prot"/>
</dbReference>
<dbReference type="InterPro" id="IPR042460">
    <property type="entry name" value="DCN1-like_PONY"/>
</dbReference>
<dbReference type="InterPro" id="IPR005176">
    <property type="entry name" value="PONY_dom"/>
</dbReference>
<dbReference type="InterPro" id="IPR009060">
    <property type="entry name" value="UBA-like_sf"/>
</dbReference>
<dbReference type="PANTHER" id="PTHR12281:SF31">
    <property type="entry name" value="DCN1-LIKE PROTEIN 3"/>
    <property type="match status" value="1"/>
</dbReference>
<dbReference type="PANTHER" id="PTHR12281">
    <property type="entry name" value="RP42 RELATED"/>
    <property type="match status" value="1"/>
</dbReference>
<dbReference type="Pfam" id="PF03556">
    <property type="entry name" value="Cullin_binding"/>
    <property type="match status" value="1"/>
</dbReference>
<dbReference type="Pfam" id="PF14555">
    <property type="entry name" value="UBA_4"/>
    <property type="match status" value="1"/>
</dbReference>
<dbReference type="SUPFAM" id="SSF46934">
    <property type="entry name" value="UBA-like"/>
    <property type="match status" value="1"/>
</dbReference>
<dbReference type="PROSITE" id="PS51229">
    <property type="entry name" value="DCUN1"/>
    <property type="match status" value="1"/>
</dbReference>
<protein>
    <recommendedName>
        <fullName>Defective in cullin neddylation protein 1</fullName>
    </recommendedName>
</protein>
<accession>Q52DM9</accession>
<accession>A4R7Z5</accession>
<accession>G4N605</accession>
<gene>
    <name type="primary">DCN1</name>
    <name type="ORF">MGG_06627</name>
</gene>
<evidence type="ECO:0000250" key="1"/>
<evidence type="ECO:0000255" key="2">
    <source>
        <dbReference type="PROSITE-ProRule" id="PRU00574"/>
    </source>
</evidence>
<reference key="1">
    <citation type="journal article" date="2005" name="Nature">
        <title>The genome sequence of the rice blast fungus Magnaporthe grisea.</title>
        <authorList>
            <person name="Dean R.A."/>
            <person name="Talbot N.J."/>
            <person name="Ebbole D.J."/>
            <person name="Farman M.L."/>
            <person name="Mitchell T.K."/>
            <person name="Orbach M.J."/>
            <person name="Thon M.R."/>
            <person name="Kulkarni R."/>
            <person name="Xu J.-R."/>
            <person name="Pan H."/>
            <person name="Read N.D."/>
            <person name="Lee Y.-H."/>
            <person name="Carbone I."/>
            <person name="Brown D."/>
            <person name="Oh Y.Y."/>
            <person name="Donofrio N."/>
            <person name="Jeong J.S."/>
            <person name="Soanes D.M."/>
            <person name="Djonovic S."/>
            <person name="Kolomiets E."/>
            <person name="Rehmeyer C."/>
            <person name="Li W."/>
            <person name="Harding M."/>
            <person name="Kim S."/>
            <person name="Lebrun M.-H."/>
            <person name="Bohnert H."/>
            <person name="Coughlan S."/>
            <person name="Butler J."/>
            <person name="Calvo S.E."/>
            <person name="Ma L.-J."/>
            <person name="Nicol R."/>
            <person name="Purcell S."/>
            <person name="Nusbaum C."/>
            <person name="Galagan J.E."/>
            <person name="Birren B.W."/>
        </authorList>
    </citation>
    <scope>NUCLEOTIDE SEQUENCE [LARGE SCALE GENOMIC DNA]</scope>
    <source>
        <strain>70-15 / ATCC MYA-4617 / FGSC 8958</strain>
    </source>
</reference>
<sequence length="281" mass="31208">MPLTAVQKTLSAQFVHMTATNDKVAQKFLKNANWKLDIAADAYFNSNPNMATSSSSKPKLDKMFSDLQDTQEDSPDELGAGSAIEYASSLGVDPESVGIFVLMELVKAPAFGVITRSGFVEGWQATNAPASKSGQKDYIQSVIRNLPQDHELFKRVYRHAFIAGRETPEQRALPLENALVYWQCFFGPEMPHSKPWVAKSSQSGGTTDFLDLWTEYLKNNWSRTVSKDMWNQTLDFAVKSTADSTLSFWTPEGSWPSVIDGFVEWLRNKGIGVASGMEVDS</sequence>
<organism>
    <name type="scientific">Pyricularia oryzae (strain 70-15 / ATCC MYA-4617 / FGSC 8958)</name>
    <name type="common">Rice blast fungus</name>
    <name type="synonym">Magnaporthe oryzae</name>
    <dbReference type="NCBI Taxonomy" id="242507"/>
    <lineage>
        <taxon>Eukaryota</taxon>
        <taxon>Fungi</taxon>
        <taxon>Dikarya</taxon>
        <taxon>Ascomycota</taxon>
        <taxon>Pezizomycotina</taxon>
        <taxon>Sordariomycetes</taxon>
        <taxon>Sordariomycetidae</taxon>
        <taxon>Magnaporthales</taxon>
        <taxon>Pyriculariaceae</taxon>
        <taxon>Pyricularia</taxon>
    </lineage>
</organism>
<keyword id="KW-1185">Reference proteome</keyword>
<keyword id="KW-0833">Ubl conjugation pathway</keyword>
<name>DCN1_PYRO7</name>
<feature type="chain" id="PRO_0000129514" description="Defective in cullin neddylation protein 1">
    <location>
        <begin position="1"/>
        <end position="281"/>
    </location>
</feature>
<feature type="domain" description="UBA-like">
    <location>
        <begin position="7"/>
        <end position="44"/>
    </location>
</feature>
<feature type="domain" description="DCUN1" evidence="2">
    <location>
        <begin position="55"/>
        <end position="267"/>
    </location>
</feature>
<proteinExistence type="inferred from homology"/>
<comment type="function">
    <text evidence="1">May contribute to neddylation of cullin components of SCF-type E3 ubiquitin ligase complexes. Neddylation of cullins play an essential role in the regulation of SCF-type complexes activity (By similarity).</text>
</comment>